<sequence>MHRHDCFKTPADEDELDDIDDDMVVGVIAEIEQEVLNESESDDDEYDLADMGAPEPERNDGNISSNESISSDGSFDPNAEDTDSDDSMLDEAATAGASIAKRRKEQNAMDGAEPSGSGPSGSGDYSHLDEDDETDETVRAMIAAIKKPRSAPPEIRLEDFITDICFHPERDIIALATIIGDVHLYEYGNEENKLLRSIEVHAKACRDVEFTEDGRSLITCSKDKCVMVTDMETEKLKKLYETAHDDAINKLHVLDERLFATGDDAGTVKLWDFRTKDAIFELKEVEDQITQMLTNEQNKLLLATSADGYLTTFNIGARKLYVQSEPYEEELNCMGIYRGSSKLVVGTSKGRLYTYNWGYFGYHCDMYPGVKSPISLMIPITDRIACVAGEDGNIRACHIAPYRNLGVVGQHNMPIESLDINSSGELLASSSHNNDVRFWNVKYFEDFGDIKYNEKHNAYKDKRHNLPSSKCTNASDFFADMTKEQDDDDNDDGGNNTTAAGSNNVT</sequence>
<keyword id="KW-1185">Reference proteome</keyword>
<keyword id="KW-0677">Repeat</keyword>
<keyword id="KW-0853">WD repeat</keyword>
<proteinExistence type="inferred from homology"/>
<gene>
    <name type="ORF">GI10299</name>
</gene>
<comment type="similarity">
    <text evidence="2">Belongs to the WD repeat WDR55 family.</text>
</comment>
<comment type="sequence caution" evidence="2">
    <conflict type="erroneous initiation">
        <sequence resource="EMBL-CDS" id="EDW16031"/>
    </conflict>
</comment>
<organism>
    <name type="scientific">Drosophila mojavensis</name>
    <name type="common">Fruit fly</name>
    <dbReference type="NCBI Taxonomy" id="7230"/>
    <lineage>
        <taxon>Eukaryota</taxon>
        <taxon>Metazoa</taxon>
        <taxon>Ecdysozoa</taxon>
        <taxon>Arthropoda</taxon>
        <taxon>Hexapoda</taxon>
        <taxon>Insecta</taxon>
        <taxon>Pterygota</taxon>
        <taxon>Neoptera</taxon>
        <taxon>Endopterygota</taxon>
        <taxon>Diptera</taxon>
        <taxon>Brachycera</taxon>
        <taxon>Muscomorpha</taxon>
        <taxon>Ephydroidea</taxon>
        <taxon>Drosophilidae</taxon>
        <taxon>Drosophila</taxon>
    </lineage>
</organism>
<protein>
    <recommendedName>
        <fullName>WD repeat-containing protein 55 homolog</fullName>
    </recommendedName>
</protein>
<evidence type="ECO:0000256" key="1">
    <source>
        <dbReference type="SAM" id="MobiDB-lite"/>
    </source>
</evidence>
<evidence type="ECO:0000305" key="2"/>
<accession>B4KE10</accession>
<reference key="1">
    <citation type="journal article" date="2007" name="Nature">
        <title>Evolution of genes and genomes on the Drosophila phylogeny.</title>
        <authorList>
            <consortium name="Drosophila 12 genomes consortium"/>
        </authorList>
    </citation>
    <scope>NUCLEOTIDE SEQUENCE [LARGE SCALE GENOMIC DNA]</scope>
    <source>
        <strain>Tucson 15081-1352.22</strain>
    </source>
</reference>
<name>WDR55_DROMO</name>
<dbReference type="EMBL" id="CH933806">
    <property type="protein sequence ID" value="EDW16031.1"/>
    <property type="status" value="ALT_INIT"/>
    <property type="molecule type" value="Genomic_DNA"/>
</dbReference>
<dbReference type="SMR" id="B4KE10"/>
<dbReference type="FunCoup" id="B4KE10">
    <property type="interactions" value="737"/>
</dbReference>
<dbReference type="EnsemblMetazoa" id="XM_032728033.2">
    <property type="protein sequence ID" value="XP_032583924.1"/>
    <property type="gene ID" value="LOC6574527"/>
</dbReference>
<dbReference type="GeneID" id="6574527"/>
<dbReference type="KEGG" id="dmo:Dmoj_GI10299"/>
<dbReference type="eggNOG" id="KOG2444">
    <property type="taxonomic scope" value="Eukaryota"/>
</dbReference>
<dbReference type="InParanoid" id="B4KE10"/>
<dbReference type="OMA" id="QAIHPTE"/>
<dbReference type="OrthoDB" id="2288928at2759"/>
<dbReference type="PhylomeDB" id="B4KE10"/>
<dbReference type="Proteomes" id="UP000009192">
    <property type="component" value="Unassembled WGS sequence"/>
</dbReference>
<dbReference type="FunFam" id="2.130.10.10:FF:001280">
    <property type="entry name" value="WD repeat-containing protein 55 homolog"/>
    <property type="match status" value="1"/>
</dbReference>
<dbReference type="Gene3D" id="2.130.10.10">
    <property type="entry name" value="YVTN repeat-like/Quinoprotein amine dehydrogenase"/>
    <property type="match status" value="2"/>
</dbReference>
<dbReference type="InterPro" id="IPR015943">
    <property type="entry name" value="WD40/YVTN_repeat-like_dom_sf"/>
</dbReference>
<dbReference type="InterPro" id="IPR019775">
    <property type="entry name" value="WD40_repeat_CS"/>
</dbReference>
<dbReference type="InterPro" id="IPR036322">
    <property type="entry name" value="WD40_repeat_dom_sf"/>
</dbReference>
<dbReference type="InterPro" id="IPR001680">
    <property type="entry name" value="WD40_rpt"/>
</dbReference>
<dbReference type="InterPro" id="IPR050505">
    <property type="entry name" value="WDR55_POC1"/>
</dbReference>
<dbReference type="PANTHER" id="PTHR44019">
    <property type="entry name" value="WD REPEAT-CONTAINING PROTEIN 55"/>
    <property type="match status" value="1"/>
</dbReference>
<dbReference type="PANTHER" id="PTHR44019:SF20">
    <property type="entry name" value="WD REPEAT-CONTAINING PROTEIN 55"/>
    <property type="match status" value="1"/>
</dbReference>
<dbReference type="Pfam" id="PF24796">
    <property type="entry name" value="WDR55"/>
    <property type="match status" value="1"/>
</dbReference>
<dbReference type="SMART" id="SM00320">
    <property type="entry name" value="WD40"/>
    <property type="match status" value="5"/>
</dbReference>
<dbReference type="SUPFAM" id="SSF50978">
    <property type="entry name" value="WD40 repeat-like"/>
    <property type="match status" value="1"/>
</dbReference>
<dbReference type="PROSITE" id="PS00678">
    <property type="entry name" value="WD_REPEATS_1"/>
    <property type="match status" value="1"/>
</dbReference>
<dbReference type="PROSITE" id="PS50082">
    <property type="entry name" value="WD_REPEATS_2"/>
    <property type="match status" value="2"/>
</dbReference>
<dbReference type="PROSITE" id="PS50294">
    <property type="entry name" value="WD_REPEATS_REGION"/>
    <property type="match status" value="1"/>
</dbReference>
<feature type="chain" id="PRO_0000373962" description="WD repeat-containing protein 55 homolog">
    <location>
        <begin position="1"/>
        <end position="506"/>
    </location>
</feature>
<feature type="repeat" description="WD 1">
    <location>
        <begin position="156"/>
        <end position="195"/>
    </location>
</feature>
<feature type="repeat" description="WD 2">
    <location>
        <begin position="200"/>
        <end position="239"/>
    </location>
</feature>
<feature type="repeat" description="WD 3">
    <location>
        <begin position="243"/>
        <end position="281"/>
    </location>
</feature>
<feature type="repeat" description="WD 4">
    <location>
        <begin position="284"/>
        <end position="323"/>
    </location>
</feature>
<feature type="repeat" description="WD 5">
    <location>
        <begin position="326"/>
        <end position="365"/>
    </location>
</feature>
<feature type="repeat" description="WD 6">
    <location>
        <begin position="410"/>
        <end position="449"/>
    </location>
</feature>
<feature type="region of interest" description="Disordered" evidence="1">
    <location>
        <begin position="1"/>
        <end position="20"/>
    </location>
</feature>
<feature type="region of interest" description="Disordered" evidence="1">
    <location>
        <begin position="33"/>
        <end position="87"/>
    </location>
</feature>
<feature type="region of interest" description="Disordered" evidence="1">
    <location>
        <begin position="100"/>
        <end position="132"/>
    </location>
</feature>
<feature type="region of interest" description="Disordered" evidence="1">
    <location>
        <begin position="480"/>
        <end position="506"/>
    </location>
</feature>
<feature type="compositionally biased region" description="Basic and acidic residues" evidence="1">
    <location>
        <begin position="1"/>
        <end position="11"/>
    </location>
</feature>
<feature type="compositionally biased region" description="Acidic residues" evidence="1">
    <location>
        <begin position="33"/>
        <end position="48"/>
    </location>
</feature>
<feature type="compositionally biased region" description="Low complexity" evidence="1">
    <location>
        <begin position="61"/>
        <end position="74"/>
    </location>
</feature>
<feature type="compositionally biased region" description="Acidic residues" evidence="1">
    <location>
        <begin position="78"/>
        <end position="87"/>
    </location>
</feature>
<feature type="compositionally biased region" description="Low complexity" evidence="1">
    <location>
        <begin position="493"/>
        <end position="506"/>
    </location>
</feature>